<keyword id="KW-0997">Cell inner membrane</keyword>
<keyword id="KW-1003">Cell membrane</keyword>
<keyword id="KW-0472">Membrane</keyword>
<keyword id="KW-0653">Protein transport</keyword>
<keyword id="KW-1185">Reference proteome</keyword>
<keyword id="KW-0811">Translocation</keyword>
<keyword id="KW-0812">Transmembrane</keyword>
<keyword id="KW-1133">Transmembrane helix</keyword>
<keyword id="KW-0813">Transport</keyword>
<proteinExistence type="inferred from homology"/>
<comment type="function">
    <text evidence="1">Part of the twin-arginine translocation (Tat) system that transports large folded proteins containing a characteristic twin-arginine motif in their signal peptide across membranes. Together with TatC, TatB is part of a receptor directly interacting with Tat signal peptides. TatB may form an oligomeric binding site that transiently accommodates folded Tat precursor proteins before their translocation.</text>
</comment>
<comment type="subunit">
    <text evidence="1">The Tat system comprises two distinct complexes: a TatABC complex, containing multiple copies of TatA, TatB and TatC subunits, and a separate TatA complex, containing only TatA subunits. Substrates initially bind to the TatABC complex, which probably triggers association of the separate TatA complex to form the active translocon.</text>
</comment>
<comment type="subcellular location">
    <subcellularLocation>
        <location evidence="1">Cell inner membrane</location>
        <topology evidence="1">Single-pass membrane protein</topology>
    </subcellularLocation>
</comment>
<comment type="similarity">
    <text evidence="1">Belongs to the TatB family.</text>
</comment>
<accession>Q2RTH3</accession>
<evidence type="ECO:0000255" key="1">
    <source>
        <dbReference type="HAMAP-Rule" id="MF_00237"/>
    </source>
</evidence>
<evidence type="ECO:0000256" key="2">
    <source>
        <dbReference type="SAM" id="MobiDB-lite"/>
    </source>
</evidence>
<organism>
    <name type="scientific">Rhodospirillum rubrum (strain ATCC 11170 / ATH 1.1.1 / DSM 467 / LMG 4362 / NCIMB 8255 / S1)</name>
    <dbReference type="NCBI Taxonomy" id="269796"/>
    <lineage>
        <taxon>Bacteria</taxon>
        <taxon>Pseudomonadati</taxon>
        <taxon>Pseudomonadota</taxon>
        <taxon>Alphaproteobacteria</taxon>
        <taxon>Rhodospirillales</taxon>
        <taxon>Rhodospirillaceae</taxon>
        <taxon>Rhodospirillum</taxon>
    </lineage>
</organism>
<name>TATB_RHORT</name>
<feature type="chain" id="PRO_0000301227" description="Sec-independent protein translocase protein TatB">
    <location>
        <begin position="1"/>
        <end position="150"/>
    </location>
</feature>
<feature type="transmembrane region" description="Helical" evidence="1">
    <location>
        <begin position="1"/>
        <end position="21"/>
    </location>
</feature>
<feature type="region of interest" description="Disordered" evidence="2">
    <location>
        <begin position="77"/>
        <end position="150"/>
    </location>
</feature>
<feature type="compositionally biased region" description="Basic and acidic residues" evidence="2">
    <location>
        <begin position="77"/>
        <end position="86"/>
    </location>
</feature>
<feature type="compositionally biased region" description="Pro residues" evidence="2">
    <location>
        <begin position="109"/>
        <end position="135"/>
    </location>
</feature>
<sequence>MFDLSWSEIALVGVVALIVIGPKDLPNVLRTAGKWVRKIRSLGSEFQRQMDDVMRETGAEDVRRQVTTLARTDVGRKIDQAIDPDGKLAASLSSVPPPSPAGPFGTSPAAPPSLPPQAPAQPVPPATGAAPPSPSAGPDRRTDGSLPPQD</sequence>
<dbReference type="EMBL" id="CP000230">
    <property type="protein sequence ID" value="ABC22572.1"/>
    <property type="molecule type" value="Genomic_DNA"/>
</dbReference>
<dbReference type="RefSeq" id="WP_011389525.1">
    <property type="nucleotide sequence ID" value="NC_007643.1"/>
</dbReference>
<dbReference type="RefSeq" id="YP_426859.1">
    <property type="nucleotide sequence ID" value="NC_007643.1"/>
</dbReference>
<dbReference type="SMR" id="Q2RTH3"/>
<dbReference type="STRING" id="269796.Rru_A1772"/>
<dbReference type="EnsemblBacteria" id="ABC22572">
    <property type="protein sequence ID" value="ABC22572"/>
    <property type="gene ID" value="Rru_A1772"/>
</dbReference>
<dbReference type="KEGG" id="rru:Rru_A1772"/>
<dbReference type="PATRIC" id="fig|269796.9.peg.1850"/>
<dbReference type="eggNOG" id="COG1826">
    <property type="taxonomic scope" value="Bacteria"/>
</dbReference>
<dbReference type="HOGENOM" id="CLU_086034_1_3_5"/>
<dbReference type="Proteomes" id="UP000001929">
    <property type="component" value="Chromosome"/>
</dbReference>
<dbReference type="GO" id="GO:0033281">
    <property type="term" value="C:TAT protein transport complex"/>
    <property type="evidence" value="ECO:0007669"/>
    <property type="project" value="UniProtKB-UniRule"/>
</dbReference>
<dbReference type="GO" id="GO:0008320">
    <property type="term" value="F:protein transmembrane transporter activity"/>
    <property type="evidence" value="ECO:0007669"/>
    <property type="project" value="UniProtKB-UniRule"/>
</dbReference>
<dbReference type="GO" id="GO:0043953">
    <property type="term" value="P:protein transport by the Tat complex"/>
    <property type="evidence" value="ECO:0007669"/>
    <property type="project" value="UniProtKB-UniRule"/>
</dbReference>
<dbReference type="Gene3D" id="1.20.5.3310">
    <property type="match status" value="1"/>
</dbReference>
<dbReference type="HAMAP" id="MF_00237">
    <property type="entry name" value="TatB"/>
    <property type="match status" value="1"/>
</dbReference>
<dbReference type="InterPro" id="IPR003369">
    <property type="entry name" value="TatA/B/E"/>
</dbReference>
<dbReference type="InterPro" id="IPR018448">
    <property type="entry name" value="TatB"/>
</dbReference>
<dbReference type="NCBIfam" id="TIGR01410">
    <property type="entry name" value="tatB"/>
    <property type="match status" value="1"/>
</dbReference>
<dbReference type="PANTHER" id="PTHR33162">
    <property type="entry name" value="SEC-INDEPENDENT PROTEIN TRANSLOCASE PROTEIN TATA, CHLOROPLASTIC"/>
    <property type="match status" value="1"/>
</dbReference>
<dbReference type="PANTHER" id="PTHR33162:SF1">
    <property type="entry name" value="SEC-INDEPENDENT PROTEIN TRANSLOCASE PROTEIN TATA, CHLOROPLASTIC"/>
    <property type="match status" value="1"/>
</dbReference>
<dbReference type="Pfam" id="PF02416">
    <property type="entry name" value="TatA_B_E"/>
    <property type="match status" value="1"/>
</dbReference>
<dbReference type="PRINTS" id="PR01506">
    <property type="entry name" value="TATBPROTEIN"/>
</dbReference>
<gene>
    <name evidence="1" type="primary">tatB</name>
    <name type="ordered locus">Rru_A1772</name>
</gene>
<reference key="1">
    <citation type="journal article" date="2011" name="Stand. Genomic Sci.">
        <title>Complete genome sequence of Rhodospirillum rubrum type strain (S1).</title>
        <authorList>
            <person name="Munk A.C."/>
            <person name="Copeland A."/>
            <person name="Lucas S."/>
            <person name="Lapidus A."/>
            <person name="Del Rio T.G."/>
            <person name="Barry K."/>
            <person name="Detter J.C."/>
            <person name="Hammon N."/>
            <person name="Israni S."/>
            <person name="Pitluck S."/>
            <person name="Brettin T."/>
            <person name="Bruce D."/>
            <person name="Han C."/>
            <person name="Tapia R."/>
            <person name="Gilna P."/>
            <person name="Schmutz J."/>
            <person name="Larimer F."/>
            <person name="Land M."/>
            <person name="Kyrpides N.C."/>
            <person name="Mavromatis K."/>
            <person name="Richardson P."/>
            <person name="Rohde M."/>
            <person name="Goeker M."/>
            <person name="Klenk H.P."/>
            <person name="Zhang Y."/>
            <person name="Roberts G.P."/>
            <person name="Reslewic S."/>
            <person name="Schwartz D.C."/>
        </authorList>
    </citation>
    <scope>NUCLEOTIDE SEQUENCE [LARGE SCALE GENOMIC DNA]</scope>
    <source>
        <strain>ATCC 11170 / ATH 1.1.1 / DSM 467 / LMG 4362 / NCIMB 8255 / S1</strain>
    </source>
</reference>
<protein>
    <recommendedName>
        <fullName evidence="1">Sec-independent protein translocase protein TatB</fullName>
    </recommendedName>
</protein>